<gene>
    <name type="primary">P3</name>
</gene>
<organismHost>
    <name type="scientific">Pseudomonas savastanoi pv. phaseolicola</name>
    <name type="common">Pseudomonas syringae pv. phaseolicola</name>
    <dbReference type="NCBI Taxonomy" id="319"/>
</organismHost>
<keyword id="KW-0903">Direct protein sequencing</keyword>
<keyword id="KW-0945">Host-virus interaction</keyword>
<keyword id="KW-0472">Membrane</keyword>
<keyword id="KW-1185">Reference proteome</keyword>
<keyword id="KW-1161">Viral attachment to host cell</keyword>
<keyword id="KW-1175">Viral attachment to host cell pilus</keyword>
<keyword id="KW-0261">Viral envelope protein</keyword>
<keyword id="KW-0946">Virion</keyword>
<keyword id="KW-1160">Virus entry into host cell</keyword>
<feature type="chain" id="PRO_0000164638" description="Spike protein P3">
    <location>
        <begin position="1"/>
        <end position="648"/>
    </location>
</feature>
<reference key="1">
    <citation type="journal article" date="1988" name="Virology">
        <title>Nucleotide sequence of the middle dsRNA segment of bacteriophage phi 6: placement of the genes of membrane-associated proteins.</title>
        <authorList>
            <person name="Gottlieb P."/>
            <person name="Metzger S."/>
            <person name="Romantschuk M."/>
            <person name="Carton J."/>
            <person name="Strassman J."/>
            <person name="Bamford D.H."/>
            <person name="Kalkkinen N."/>
            <person name="Mindich L."/>
        </authorList>
    </citation>
    <scope>NUCLEOTIDE SEQUENCE [GENOMIC RNA]</scope>
    <scope>PROTEIN SEQUENCE OF 1-13</scope>
</reference>
<reference key="2">
    <citation type="journal article" date="1983" name="Virology">
        <title>The structure of bacteriophage phi 6: protease digestion of phi 6 virions.</title>
        <authorList>
            <person name="Stitt B.L."/>
            <person name="Mindich L."/>
        </authorList>
    </citation>
    <scope>INTERACTION WITH P6</scope>
</reference>
<reference key="3">
    <citation type="journal article" date="2005" name="J. Virol.">
        <title>Penetration of enveloped double-stranded RNA bacteriophages phi13 and phi6 into Pseudomonas syringae cells.</title>
        <authorList>
            <person name="Daugelavicius R."/>
            <person name="Cvirkaite V."/>
            <person name="Gaidelyte A."/>
            <person name="Bakiene E."/>
            <person name="Gabrenaite-Verkhovskaya R."/>
            <person name="Bamford D.H."/>
        </authorList>
    </citation>
    <scope>FUNCTION</scope>
</reference>
<reference key="4">
    <citation type="journal article" date="2007" name="Structure">
        <title>Electron cryomicroscopy comparison of the architectures of the enveloped bacteriophages phi6 and phi8.</title>
        <authorList>
            <person name="Jaalinoja H.T."/>
            <person name="Huiskonen J.T."/>
            <person name="Butcher S.J."/>
        </authorList>
    </citation>
    <scope>STRUCTURE BY ELECTRON MICROSCOPY (14.0 ANGSTROMS)</scope>
</reference>
<organism>
    <name type="scientific">Pseudomonas phage phi6</name>
    <name type="common">Bacteriophage phi-6</name>
    <dbReference type="NCBI Taxonomy" id="2928686"/>
    <lineage>
        <taxon>Viruses</taxon>
        <taxon>Riboviria</taxon>
        <taxon>Orthornavirae</taxon>
        <taxon>Duplornaviricota</taxon>
        <taxon>Vidaverviricetes</taxon>
        <taxon>Mindivirales</taxon>
        <taxon>Cystoviridae</taxon>
        <taxon>Cystovirus</taxon>
        <taxon>Cystovirus phi6</taxon>
    </lineage>
</organism>
<proteinExistence type="evidence at protein level"/>
<comment type="function">
    <text evidence="1">P3 protein is necessary for adsorption onto host cells. Attaches to a type IV pilus of the host.</text>
</comment>
<comment type="subunit">
    <text evidence="2">Interacts with P6.</text>
</comment>
<comment type="subcellular location">
    <subcellularLocation>
        <location>Virion membrane</location>
        <topology>Peripheral membrane protein</topology>
    </subcellularLocation>
    <text>The spike protein P3 protrudes from the membrane, where it is anchored by the integral membrane protein P6.</text>
</comment>
<name>P3_BPPH6</name>
<accession>P11129</accession>
<protein>
    <recommendedName>
        <fullName>Spike protein P3</fullName>
    </recommendedName>
</protein>
<dbReference type="EMBL" id="M17462">
    <property type="protein sequence ID" value="AAA68485.1"/>
    <property type="molecule type" value="Genomic_RNA"/>
</dbReference>
<dbReference type="PIR" id="C28648">
    <property type="entry name" value="P3BPF6"/>
</dbReference>
<dbReference type="RefSeq" id="NP_620351.1">
    <property type="nucleotide sequence ID" value="NC_003716.1"/>
</dbReference>
<dbReference type="KEGG" id="vg:956441"/>
<dbReference type="Proteomes" id="UP000002610">
    <property type="component" value="Genome"/>
</dbReference>
<dbReference type="GO" id="GO:0016020">
    <property type="term" value="C:membrane"/>
    <property type="evidence" value="ECO:0007669"/>
    <property type="project" value="UniProtKB-KW"/>
</dbReference>
<dbReference type="GO" id="GO:0019031">
    <property type="term" value="C:viral envelope"/>
    <property type="evidence" value="ECO:0007669"/>
    <property type="project" value="UniProtKB-KW"/>
</dbReference>
<dbReference type="GO" id="GO:0055036">
    <property type="term" value="C:virion membrane"/>
    <property type="evidence" value="ECO:0007669"/>
    <property type="project" value="UniProtKB-SubCell"/>
</dbReference>
<dbReference type="GO" id="GO:0039666">
    <property type="term" value="P:virion attachment to host cell pilus"/>
    <property type="evidence" value="ECO:0007669"/>
    <property type="project" value="UniProtKB-KW"/>
</dbReference>
<sequence>MRYQGINEWLGGAKKLTTANGEIGAIYLSAAPPTDAARADAKAVDFTAGWPSAIVDCADATRAKQNYLWVGDNVVHIGAKHVPLLDLWGGTGDAWQQFVGYACPMLDLCRAWGLGYASASVTTGSLQGYQPSAFLDVEQQQFAKDNLNLYGDNCLDLATSSSAQRAFLEQCMGCALPEDCIFGWYVKMDWEGSAVADAYAAIRVQGFATVMAPWQSVGGAGYVYARVPQKGAWMGVNLLAYVHGTSGQPAYGIPMTLSGFTGNMGQVASKWLMLPLLMIVDPHVVQILAALGVKRGTKSDPRTTDVYADPKVPASRISGPMINGTVAPPATIPATIPVPLAPLGGAGGPGAQGFQVYPVFTWGLPEFMTDVTIEGTVTADSNGLHVVDDVRNYVWNGTALAAIEQVNAADGRVTLTDSERAQLASLTVRTASLRQQLSVGADPLSKTSIWRRAQKADYDLLSQQIIEADTVKNLPAVTFAQANKAAGGQSETLWHQMYRVNDIAGDQVTAIQITGTMATGIRWSATAGGLVVDADEQDAVIAISSGKPVKNSSDLPTADAVNYLFGITADDMPGIVSSQKEMNSEFEEGFLQKARLWNPRKLVENVQNAYFLMVYARDRKQFHSLVASSLAMAKLGVSTRACKESYGC</sequence>
<evidence type="ECO:0000269" key="1">
    <source>
    </source>
</evidence>
<evidence type="ECO:0000305" key="2">
    <source>
    </source>
</evidence>